<proteinExistence type="inferred from homology"/>
<sequence>MRIYINEIKLKDDGVYCFSEESTEGLEEVGQMLVDSDNYGFAYLLDDGQSYSYLIFVQETWSMLHENRDKRIIINNHLELKHFQEELDYVLNNIEGNNNYGKEFVSAVEKTFELE</sequence>
<dbReference type="EMBL" id="AE015929">
    <property type="protein sequence ID" value="AAO04291.1"/>
    <property type="molecule type" value="Genomic_DNA"/>
</dbReference>
<dbReference type="RefSeq" id="NP_764249.1">
    <property type="nucleotide sequence ID" value="NC_004461.1"/>
</dbReference>
<dbReference type="RefSeq" id="WP_001829330.1">
    <property type="nucleotide sequence ID" value="NZ_WBME01000019.1"/>
</dbReference>
<dbReference type="KEGG" id="sep:SE_0694"/>
<dbReference type="PATRIC" id="fig|176280.10.peg.668"/>
<dbReference type="eggNOG" id="ENOG5032YMN">
    <property type="taxonomic scope" value="Bacteria"/>
</dbReference>
<dbReference type="HOGENOM" id="CLU_142282_0_0_9"/>
<dbReference type="OrthoDB" id="2966478at2"/>
<dbReference type="Proteomes" id="UP000001411">
    <property type="component" value="Chromosome"/>
</dbReference>
<dbReference type="HAMAP" id="MF_01861">
    <property type="entry name" value="UPF0738"/>
    <property type="match status" value="1"/>
</dbReference>
<dbReference type="InterPro" id="IPR020908">
    <property type="entry name" value="UPF0738"/>
</dbReference>
<dbReference type="Pfam" id="PF19785">
    <property type="entry name" value="UPF0738"/>
    <property type="match status" value="1"/>
</dbReference>
<reference key="1">
    <citation type="journal article" date="2003" name="Mol. Microbiol.">
        <title>Genome-based analysis of virulence genes in a non-biofilm-forming Staphylococcus epidermidis strain (ATCC 12228).</title>
        <authorList>
            <person name="Zhang Y.-Q."/>
            <person name="Ren S.-X."/>
            <person name="Li H.-L."/>
            <person name="Wang Y.-X."/>
            <person name="Fu G."/>
            <person name="Yang J."/>
            <person name="Qin Z.-Q."/>
            <person name="Miao Y.-G."/>
            <person name="Wang W.-Y."/>
            <person name="Chen R.-S."/>
            <person name="Shen Y."/>
            <person name="Chen Z."/>
            <person name="Yuan Z.-H."/>
            <person name="Zhao G.-P."/>
            <person name="Qu D."/>
            <person name="Danchin A."/>
            <person name="Wen Y.-M."/>
        </authorList>
    </citation>
    <scope>NUCLEOTIDE SEQUENCE [LARGE SCALE GENOMIC DNA]</scope>
    <source>
        <strain>ATCC 12228 / FDA PCI 1200</strain>
    </source>
</reference>
<name>Y694_STAES</name>
<protein>
    <recommendedName>
        <fullName evidence="1">UPF0738 protein SE_0694</fullName>
    </recommendedName>
</protein>
<accession>Q8CT64</accession>
<gene>
    <name type="ordered locus">SE_0694</name>
</gene>
<feature type="chain" id="PRO_0000369671" description="UPF0738 protein SE_0694">
    <location>
        <begin position="1"/>
        <end position="115"/>
    </location>
</feature>
<comment type="similarity">
    <text evidence="1">Belongs to the UPF0738 family.</text>
</comment>
<evidence type="ECO:0000255" key="1">
    <source>
        <dbReference type="HAMAP-Rule" id="MF_01861"/>
    </source>
</evidence>
<organism>
    <name type="scientific">Staphylococcus epidermidis (strain ATCC 12228 / FDA PCI 1200)</name>
    <dbReference type="NCBI Taxonomy" id="176280"/>
    <lineage>
        <taxon>Bacteria</taxon>
        <taxon>Bacillati</taxon>
        <taxon>Bacillota</taxon>
        <taxon>Bacilli</taxon>
        <taxon>Bacillales</taxon>
        <taxon>Staphylococcaceae</taxon>
        <taxon>Staphylococcus</taxon>
    </lineage>
</organism>